<accession>A9M3U5</accession>
<proteinExistence type="inferred from homology"/>
<evidence type="ECO:0000255" key="1">
    <source>
        <dbReference type="HAMAP-Rule" id="MF_00075"/>
    </source>
</evidence>
<feature type="chain" id="PRO_0000338869" description="Translation initiation factor IF-1">
    <location>
        <begin position="1"/>
        <end position="72"/>
    </location>
</feature>
<feature type="domain" description="S1-like" evidence="1">
    <location>
        <begin position="1"/>
        <end position="72"/>
    </location>
</feature>
<protein>
    <recommendedName>
        <fullName evidence="1">Translation initiation factor IF-1</fullName>
    </recommendedName>
</protein>
<comment type="function">
    <text evidence="1">One of the essential components for the initiation of protein synthesis. Stabilizes the binding of IF-2 and IF-3 on the 30S subunit to which N-formylmethionyl-tRNA(fMet) subsequently binds. Helps modulate mRNA selection, yielding the 30S pre-initiation complex (PIC). Upon addition of the 50S ribosomal subunit IF-1, IF-2 and IF-3 are released leaving the mature 70S translation initiation complex.</text>
</comment>
<comment type="subunit">
    <text evidence="1">Component of the 30S ribosomal translation pre-initiation complex which assembles on the 30S ribosome in the order IF-2 and IF-3, IF-1 and N-formylmethionyl-tRNA(fMet); mRNA recruitment can occur at any time during PIC assembly.</text>
</comment>
<comment type="subcellular location">
    <subcellularLocation>
        <location evidence="1">Cytoplasm</location>
    </subcellularLocation>
</comment>
<comment type="similarity">
    <text evidence="1">Belongs to the IF-1 family.</text>
</comment>
<gene>
    <name evidence="1" type="primary">infA</name>
    <name type="ordered locus">NMCC_1987b</name>
</gene>
<dbReference type="EMBL" id="CP000381">
    <property type="protein sequence ID" value="ABX74239.1"/>
    <property type="molecule type" value="Genomic_DNA"/>
</dbReference>
<dbReference type="RefSeq" id="WP_002215452.1">
    <property type="nucleotide sequence ID" value="NC_010120.1"/>
</dbReference>
<dbReference type="SMR" id="A9M3U5"/>
<dbReference type="GeneID" id="93387238"/>
<dbReference type="KEGG" id="nmn:NMCC_1987b"/>
<dbReference type="HOGENOM" id="CLU_151267_1_0_4"/>
<dbReference type="Proteomes" id="UP000001177">
    <property type="component" value="Chromosome"/>
</dbReference>
<dbReference type="GO" id="GO:0005829">
    <property type="term" value="C:cytosol"/>
    <property type="evidence" value="ECO:0007669"/>
    <property type="project" value="TreeGrafter"/>
</dbReference>
<dbReference type="GO" id="GO:0043022">
    <property type="term" value="F:ribosome binding"/>
    <property type="evidence" value="ECO:0007669"/>
    <property type="project" value="UniProtKB-UniRule"/>
</dbReference>
<dbReference type="GO" id="GO:0019843">
    <property type="term" value="F:rRNA binding"/>
    <property type="evidence" value="ECO:0007669"/>
    <property type="project" value="UniProtKB-UniRule"/>
</dbReference>
<dbReference type="GO" id="GO:0003743">
    <property type="term" value="F:translation initiation factor activity"/>
    <property type="evidence" value="ECO:0007669"/>
    <property type="project" value="UniProtKB-UniRule"/>
</dbReference>
<dbReference type="CDD" id="cd04451">
    <property type="entry name" value="S1_IF1"/>
    <property type="match status" value="1"/>
</dbReference>
<dbReference type="FunFam" id="2.40.50.140:FF:000002">
    <property type="entry name" value="Translation initiation factor IF-1"/>
    <property type="match status" value="1"/>
</dbReference>
<dbReference type="Gene3D" id="2.40.50.140">
    <property type="entry name" value="Nucleic acid-binding proteins"/>
    <property type="match status" value="1"/>
</dbReference>
<dbReference type="HAMAP" id="MF_00075">
    <property type="entry name" value="IF_1"/>
    <property type="match status" value="1"/>
</dbReference>
<dbReference type="InterPro" id="IPR012340">
    <property type="entry name" value="NA-bd_OB-fold"/>
</dbReference>
<dbReference type="InterPro" id="IPR006196">
    <property type="entry name" value="RNA-binding_domain_S1_IF1"/>
</dbReference>
<dbReference type="InterPro" id="IPR004368">
    <property type="entry name" value="TIF_IF1"/>
</dbReference>
<dbReference type="NCBIfam" id="TIGR00008">
    <property type="entry name" value="infA"/>
    <property type="match status" value="1"/>
</dbReference>
<dbReference type="PANTHER" id="PTHR33370">
    <property type="entry name" value="TRANSLATION INITIATION FACTOR IF-1, CHLOROPLASTIC"/>
    <property type="match status" value="1"/>
</dbReference>
<dbReference type="PANTHER" id="PTHR33370:SF1">
    <property type="entry name" value="TRANSLATION INITIATION FACTOR IF-1, CHLOROPLASTIC"/>
    <property type="match status" value="1"/>
</dbReference>
<dbReference type="Pfam" id="PF01176">
    <property type="entry name" value="eIF-1a"/>
    <property type="match status" value="1"/>
</dbReference>
<dbReference type="SUPFAM" id="SSF50249">
    <property type="entry name" value="Nucleic acid-binding proteins"/>
    <property type="match status" value="1"/>
</dbReference>
<dbReference type="PROSITE" id="PS50832">
    <property type="entry name" value="S1_IF1_TYPE"/>
    <property type="match status" value="1"/>
</dbReference>
<keyword id="KW-0963">Cytoplasm</keyword>
<keyword id="KW-0396">Initiation factor</keyword>
<keyword id="KW-0648">Protein biosynthesis</keyword>
<keyword id="KW-0694">RNA-binding</keyword>
<keyword id="KW-0699">rRNA-binding</keyword>
<organism>
    <name type="scientific">Neisseria meningitidis serogroup C (strain 053442)</name>
    <dbReference type="NCBI Taxonomy" id="374833"/>
    <lineage>
        <taxon>Bacteria</taxon>
        <taxon>Pseudomonadati</taxon>
        <taxon>Pseudomonadota</taxon>
        <taxon>Betaproteobacteria</taxon>
        <taxon>Neisseriales</taxon>
        <taxon>Neisseriaceae</taxon>
        <taxon>Neisseria</taxon>
    </lineage>
</organism>
<name>IF1_NEIM0</name>
<sequence>MAKEDTIQMQGEILETLPNATFKVKLENDHIVLGHISGKMRMHYIRISPGDKVTVELTPYDLTRARIVFRAR</sequence>
<reference key="1">
    <citation type="journal article" date="2008" name="Genomics">
        <title>Characterization of ST-4821 complex, a unique Neisseria meningitidis clone.</title>
        <authorList>
            <person name="Peng J."/>
            <person name="Yang L."/>
            <person name="Yang F."/>
            <person name="Yang J."/>
            <person name="Yan Y."/>
            <person name="Nie H."/>
            <person name="Zhang X."/>
            <person name="Xiong Z."/>
            <person name="Jiang Y."/>
            <person name="Cheng F."/>
            <person name="Xu X."/>
            <person name="Chen S."/>
            <person name="Sun L."/>
            <person name="Li W."/>
            <person name="Shen Y."/>
            <person name="Shao Z."/>
            <person name="Liang X."/>
            <person name="Xu J."/>
            <person name="Jin Q."/>
        </authorList>
    </citation>
    <scope>NUCLEOTIDE SEQUENCE [LARGE SCALE GENOMIC DNA]</scope>
    <source>
        <strain>053442</strain>
    </source>
</reference>